<protein>
    <recommendedName>
        <fullName evidence="1">Large-conductance mechanosensitive channel</fullName>
    </recommendedName>
</protein>
<name>MSCL_ECOLC</name>
<gene>
    <name evidence="1" type="primary">mscL</name>
    <name type="ordered locus">EcolC_0423</name>
</gene>
<reference key="1">
    <citation type="submission" date="2008-02" db="EMBL/GenBank/DDBJ databases">
        <title>Complete sequence of Escherichia coli C str. ATCC 8739.</title>
        <authorList>
            <person name="Copeland A."/>
            <person name="Lucas S."/>
            <person name="Lapidus A."/>
            <person name="Glavina del Rio T."/>
            <person name="Dalin E."/>
            <person name="Tice H."/>
            <person name="Bruce D."/>
            <person name="Goodwin L."/>
            <person name="Pitluck S."/>
            <person name="Kiss H."/>
            <person name="Brettin T."/>
            <person name="Detter J.C."/>
            <person name="Han C."/>
            <person name="Kuske C.R."/>
            <person name="Schmutz J."/>
            <person name="Larimer F."/>
            <person name="Land M."/>
            <person name="Hauser L."/>
            <person name="Kyrpides N."/>
            <person name="Mikhailova N."/>
            <person name="Ingram L."/>
            <person name="Richardson P."/>
        </authorList>
    </citation>
    <scope>NUCLEOTIDE SEQUENCE [LARGE SCALE GENOMIC DNA]</scope>
    <source>
        <strain>ATCC 8739 / DSM 1576 / NBRC 3972 / NCIMB 8545 / WDCM 00012 / Crooks</strain>
    </source>
</reference>
<comment type="function">
    <text evidence="1">Channel that opens in response to stretch forces in the membrane lipid bilayer. May participate in the regulation of osmotic pressure changes within the cell.</text>
</comment>
<comment type="subunit">
    <text evidence="1">Homopentamer.</text>
</comment>
<comment type="subcellular location">
    <subcellularLocation>
        <location evidence="1">Cell inner membrane</location>
        <topology evidence="1">Multi-pass membrane protein</topology>
    </subcellularLocation>
</comment>
<comment type="similarity">
    <text evidence="1">Belongs to the MscL family.</text>
</comment>
<keyword id="KW-0997">Cell inner membrane</keyword>
<keyword id="KW-1003">Cell membrane</keyword>
<keyword id="KW-0407">Ion channel</keyword>
<keyword id="KW-0406">Ion transport</keyword>
<keyword id="KW-0472">Membrane</keyword>
<keyword id="KW-0812">Transmembrane</keyword>
<keyword id="KW-1133">Transmembrane helix</keyword>
<keyword id="KW-0813">Transport</keyword>
<dbReference type="EMBL" id="CP000946">
    <property type="protein sequence ID" value="ACA76101.1"/>
    <property type="molecule type" value="Genomic_DNA"/>
</dbReference>
<dbReference type="RefSeq" id="WP_000022442.1">
    <property type="nucleotide sequence ID" value="NZ_MTFT01000014.1"/>
</dbReference>
<dbReference type="SMR" id="B1IQ09"/>
<dbReference type="GeneID" id="75173461"/>
<dbReference type="KEGG" id="ecl:EcolC_0423"/>
<dbReference type="HOGENOM" id="CLU_095787_0_0_6"/>
<dbReference type="GO" id="GO:0005886">
    <property type="term" value="C:plasma membrane"/>
    <property type="evidence" value="ECO:0007669"/>
    <property type="project" value="UniProtKB-SubCell"/>
</dbReference>
<dbReference type="GO" id="GO:0008381">
    <property type="term" value="F:mechanosensitive monoatomic ion channel activity"/>
    <property type="evidence" value="ECO:0007669"/>
    <property type="project" value="UniProtKB-UniRule"/>
</dbReference>
<dbReference type="FunFam" id="1.10.1200.120:FF:000001">
    <property type="entry name" value="Large-conductance mechanosensitive channel"/>
    <property type="match status" value="1"/>
</dbReference>
<dbReference type="Gene3D" id="1.10.1200.120">
    <property type="entry name" value="Large-conductance mechanosensitive channel, MscL, domain 1"/>
    <property type="match status" value="1"/>
</dbReference>
<dbReference type="HAMAP" id="MF_00115">
    <property type="entry name" value="MscL"/>
    <property type="match status" value="1"/>
</dbReference>
<dbReference type="InterPro" id="IPR019823">
    <property type="entry name" value="Mechanosensitive_channel_CS"/>
</dbReference>
<dbReference type="InterPro" id="IPR001185">
    <property type="entry name" value="MS_channel"/>
</dbReference>
<dbReference type="InterPro" id="IPR037673">
    <property type="entry name" value="MSC/AndL"/>
</dbReference>
<dbReference type="InterPro" id="IPR036019">
    <property type="entry name" value="MscL_channel"/>
</dbReference>
<dbReference type="NCBIfam" id="TIGR00220">
    <property type="entry name" value="mscL"/>
    <property type="match status" value="1"/>
</dbReference>
<dbReference type="NCBIfam" id="NF001841">
    <property type="entry name" value="PRK00567.1-1"/>
    <property type="match status" value="1"/>
</dbReference>
<dbReference type="NCBIfam" id="NF001843">
    <property type="entry name" value="PRK00567.1-4"/>
    <property type="match status" value="1"/>
</dbReference>
<dbReference type="PANTHER" id="PTHR30266:SF2">
    <property type="entry name" value="LARGE-CONDUCTANCE MECHANOSENSITIVE CHANNEL"/>
    <property type="match status" value="1"/>
</dbReference>
<dbReference type="PANTHER" id="PTHR30266">
    <property type="entry name" value="MECHANOSENSITIVE CHANNEL MSCL"/>
    <property type="match status" value="1"/>
</dbReference>
<dbReference type="Pfam" id="PF01741">
    <property type="entry name" value="MscL"/>
    <property type="match status" value="1"/>
</dbReference>
<dbReference type="PRINTS" id="PR01264">
    <property type="entry name" value="MECHCHANNEL"/>
</dbReference>
<dbReference type="SUPFAM" id="SSF81330">
    <property type="entry name" value="Gated mechanosensitive channel"/>
    <property type="match status" value="1"/>
</dbReference>
<dbReference type="PROSITE" id="PS01327">
    <property type="entry name" value="MSCL"/>
    <property type="match status" value="1"/>
</dbReference>
<evidence type="ECO:0000255" key="1">
    <source>
        <dbReference type="HAMAP-Rule" id="MF_00115"/>
    </source>
</evidence>
<organism>
    <name type="scientific">Escherichia coli (strain ATCC 8739 / DSM 1576 / NBRC 3972 / NCIMB 8545 / WDCM 00012 / Crooks)</name>
    <dbReference type="NCBI Taxonomy" id="481805"/>
    <lineage>
        <taxon>Bacteria</taxon>
        <taxon>Pseudomonadati</taxon>
        <taxon>Pseudomonadota</taxon>
        <taxon>Gammaproteobacteria</taxon>
        <taxon>Enterobacterales</taxon>
        <taxon>Enterobacteriaceae</taxon>
        <taxon>Escherichia</taxon>
    </lineage>
</organism>
<proteinExistence type="inferred from homology"/>
<sequence length="136" mass="14957">MSIIKEFREFAMRGNVVDLAVGVIIGAAFGKIVSSLVADIIMPPLGLLIGGIDFKQFAVTLRDAQGDIPAVVMHYGVFIQNVFDFLIVAFAIFMAIKLINKLNRKKEEPAAAPAPTKEEVLLTEIRDLLKEQNNRS</sequence>
<feature type="chain" id="PRO_1000076040" description="Large-conductance mechanosensitive channel">
    <location>
        <begin position="1"/>
        <end position="136"/>
    </location>
</feature>
<feature type="transmembrane region" description="Helical" evidence="1">
    <location>
        <begin position="10"/>
        <end position="30"/>
    </location>
</feature>
<feature type="transmembrane region" description="Helical" evidence="1">
    <location>
        <begin position="76"/>
        <end position="96"/>
    </location>
</feature>
<accession>B1IQ09</accession>